<gene>
    <name evidence="1" type="primary">fluC</name>
    <name evidence="1" type="synonym">crcB</name>
    <name type="ordered locus">BMASAVP1_A0749</name>
</gene>
<protein>
    <recommendedName>
        <fullName evidence="1">Fluoride-specific ion channel FluC</fullName>
    </recommendedName>
</protein>
<dbReference type="EMBL" id="CP000526">
    <property type="protein sequence ID" value="ABM50930.1"/>
    <property type="molecule type" value="Genomic_DNA"/>
</dbReference>
<dbReference type="RefSeq" id="WP_004186560.1">
    <property type="nucleotide sequence ID" value="NC_008785.1"/>
</dbReference>
<dbReference type="SMR" id="A1V1J1"/>
<dbReference type="GeneID" id="92979864"/>
<dbReference type="KEGG" id="bmv:BMASAVP1_A0749"/>
<dbReference type="HOGENOM" id="CLU_114342_3_3_4"/>
<dbReference type="GO" id="GO:0005886">
    <property type="term" value="C:plasma membrane"/>
    <property type="evidence" value="ECO:0007669"/>
    <property type="project" value="UniProtKB-SubCell"/>
</dbReference>
<dbReference type="GO" id="GO:0062054">
    <property type="term" value="F:fluoride channel activity"/>
    <property type="evidence" value="ECO:0007669"/>
    <property type="project" value="UniProtKB-UniRule"/>
</dbReference>
<dbReference type="GO" id="GO:0046872">
    <property type="term" value="F:metal ion binding"/>
    <property type="evidence" value="ECO:0007669"/>
    <property type="project" value="UniProtKB-KW"/>
</dbReference>
<dbReference type="GO" id="GO:0140114">
    <property type="term" value="P:cellular detoxification of fluoride"/>
    <property type="evidence" value="ECO:0007669"/>
    <property type="project" value="UniProtKB-UniRule"/>
</dbReference>
<dbReference type="HAMAP" id="MF_00454">
    <property type="entry name" value="FluC"/>
    <property type="match status" value="1"/>
</dbReference>
<dbReference type="InterPro" id="IPR003691">
    <property type="entry name" value="FluC"/>
</dbReference>
<dbReference type="NCBIfam" id="TIGR00494">
    <property type="entry name" value="crcB"/>
    <property type="match status" value="1"/>
</dbReference>
<dbReference type="NCBIfam" id="NF010792">
    <property type="entry name" value="PRK14196.1"/>
    <property type="match status" value="1"/>
</dbReference>
<dbReference type="PANTHER" id="PTHR28259">
    <property type="entry name" value="FLUORIDE EXPORT PROTEIN 1-RELATED"/>
    <property type="match status" value="1"/>
</dbReference>
<dbReference type="PANTHER" id="PTHR28259:SF1">
    <property type="entry name" value="FLUORIDE EXPORT PROTEIN 1-RELATED"/>
    <property type="match status" value="1"/>
</dbReference>
<dbReference type="Pfam" id="PF02537">
    <property type="entry name" value="CRCB"/>
    <property type="match status" value="1"/>
</dbReference>
<proteinExistence type="inferred from homology"/>
<feature type="chain" id="PRO_1000026373" description="Fluoride-specific ion channel FluC">
    <location>
        <begin position="1"/>
        <end position="128"/>
    </location>
</feature>
<feature type="transmembrane region" description="Helical" evidence="1">
    <location>
        <begin position="5"/>
        <end position="25"/>
    </location>
</feature>
<feature type="transmembrane region" description="Helical" evidence="1">
    <location>
        <begin position="35"/>
        <end position="55"/>
    </location>
</feature>
<feature type="transmembrane region" description="Helical" evidence="1">
    <location>
        <begin position="67"/>
        <end position="87"/>
    </location>
</feature>
<feature type="transmembrane region" description="Helical" evidence="1">
    <location>
        <begin position="96"/>
        <end position="116"/>
    </location>
</feature>
<feature type="binding site" evidence="1">
    <location>
        <position position="75"/>
    </location>
    <ligand>
        <name>Na(+)</name>
        <dbReference type="ChEBI" id="CHEBI:29101"/>
        <note>structural</note>
    </ligand>
</feature>
<feature type="binding site" evidence="1">
    <location>
        <position position="78"/>
    </location>
    <ligand>
        <name>Na(+)</name>
        <dbReference type="ChEBI" id="CHEBI:29101"/>
        <note>structural</note>
    </ligand>
</feature>
<evidence type="ECO:0000255" key="1">
    <source>
        <dbReference type="HAMAP-Rule" id="MF_00454"/>
    </source>
</evidence>
<comment type="function">
    <text evidence="1">Fluoride-specific ion channel. Important for reducing fluoride concentration in the cell, thus reducing its toxicity.</text>
</comment>
<comment type="catalytic activity">
    <reaction evidence="1">
        <text>fluoride(in) = fluoride(out)</text>
        <dbReference type="Rhea" id="RHEA:76159"/>
        <dbReference type="ChEBI" id="CHEBI:17051"/>
    </reaction>
    <physiologicalReaction direction="left-to-right" evidence="1">
        <dbReference type="Rhea" id="RHEA:76160"/>
    </physiologicalReaction>
</comment>
<comment type="activity regulation">
    <text evidence="1">Na(+) is not transported, but it plays an essential structural role and its presence is essential for fluoride channel function.</text>
</comment>
<comment type="subcellular location">
    <subcellularLocation>
        <location evidence="1">Cell inner membrane</location>
        <topology evidence="1">Multi-pass membrane protein</topology>
    </subcellularLocation>
</comment>
<comment type="similarity">
    <text evidence="1">Belongs to the fluoride channel Fluc/FEX (TC 1.A.43) family.</text>
</comment>
<accession>A1V1J1</accession>
<keyword id="KW-0997">Cell inner membrane</keyword>
<keyword id="KW-1003">Cell membrane</keyword>
<keyword id="KW-0407">Ion channel</keyword>
<keyword id="KW-0406">Ion transport</keyword>
<keyword id="KW-0472">Membrane</keyword>
<keyword id="KW-0479">Metal-binding</keyword>
<keyword id="KW-0915">Sodium</keyword>
<keyword id="KW-0812">Transmembrane</keyword>
<keyword id="KW-1133">Transmembrane helix</keyword>
<keyword id="KW-0813">Transport</keyword>
<name>FLUC_BURMS</name>
<reference key="1">
    <citation type="journal article" date="2010" name="Genome Biol. Evol.">
        <title>Continuing evolution of Burkholderia mallei through genome reduction and large-scale rearrangements.</title>
        <authorList>
            <person name="Losada L."/>
            <person name="Ronning C.M."/>
            <person name="DeShazer D."/>
            <person name="Woods D."/>
            <person name="Fedorova N."/>
            <person name="Kim H.S."/>
            <person name="Shabalina S.A."/>
            <person name="Pearson T.R."/>
            <person name="Brinkac L."/>
            <person name="Tan P."/>
            <person name="Nandi T."/>
            <person name="Crabtree J."/>
            <person name="Badger J."/>
            <person name="Beckstrom-Sternberg S."/>
            <person name="Saqib M."/>
            <person name="Schutzer S.E."/>
            <person name="Keim P."/>
            <person name="Nierman W.C."/>
        </authorList>
    </citation>
    <scope>NUCLEOTIDE SEQUENCE [LARGE SCALE GENOMIC DNA]</scope>
    <source>
        <strain>SAVP1</strain>
    </source>
</reference>
<sequence>MFYSIVAIFVGAGFGALLRWFLSIGLNALLPEVPLGTLASNLIGGYLIGIAVVAFATRAGLPPEWRLFVITGFMGGLTTFSTYSVEVMTHAVQGEFGWALAVAALHLIGSFTLTGLGMWTARAWLAPA</sequence>
<organism>
    <name type="scientific">Burkholderia mallei (strain SAVP1)</name>
    <dbReference type="NCBI Taxonomy" id="320388"/>
    <lineage>
        <taxon>Bacteria</taxon>
        <taxon>Pseudomonadati</taxon>
        <taxon>Pseudomonadota</taxon>
        <taxon>Betaproteobacteria</taxon>
        <taxon>Burkholderiales</taxon>
        <taxon>Burkholderiaceae</taxon>
        <taxon>Burkholderia</taxon>
        <taxon>pseudomallei group</taxon>
    </lineage>
</organism>